<reference key="1">
    <citation type="submission" date="2008-10" db="EMBL/GenBank/DDBJ databases">
        <title>Genome sequence of Bacillus cereus AH820.</title>
        <authorList>
            <person name="Dodson R.J."/>
            <person name="Durkin A.S."/>
            <person name="Rosovitz M.J."/>
            <person name="Rasko D.A."/>
            <person name="Hoffmaster A."/>
            <person name="Ravel J."/>
            <person name="Sutton G."/>
        </authorList>
    </citation>
    <scope>NUCLEOTIDE SEQUENCE [LARGE SCALE GENOMIC DNA]</scope>
    <source>
        <strain>AH820</strain>
    </source>
</reference>
<organism>
    <name type="scientific">Bacillus cereus (strain AH820)</name>
    <dbReference type="NCBI Taxonomy" id="405535"/>
    <lineage>
        <taxon>Bacteria</taxon>
        <taxon>Bacillati</taxon>
        <taxon>Bacillota</taxon>
        <taxon>Bacilli</taxon>
        <taxon>Bacillales</taxon>
        <taxon>Bacillaceae</taxon>
        <taxon>Bacillus</taxon>
        <taxon>Bacillus cereus group</taxon>
    </lineage>
</organism>
<keyword id="KW-0131">Cell cycle</keyword>
<keyword id="KW-0132">Cell division</keyword>
<keyword id="KW-1003">Cell membrane</keyword>
<keyword id="KW-0133">Cell shape</keyword>
<keyword id="KW-0961">Cell wall biogenesis/degradation</keyword>
<keyword id="KW-0460">Magnesium</keyword>
<keyword id="KW-0472">Membrane</keyword>
<keyword id="KW-0479">Metal-binding</keyword>
<keyword id="KW-0573">Peptidoglycan synthesis</keyword>
<keyword id="KW-0808">Transferase</keyword>
<keyword id="KW-0812">Transmembrane</keyword>
<keyword id="KW-1133">Transmembrane helix</keyword>
<comment type="function">
    <text evidence="1">Catalyzes the initial step of the lipid cycle reactions in the biosynthesis of the cell wall peptidoglycan: transfers peptidoglycan precursor phospho-MurNAc-pentapeptide from UDP-MurNAc-pentapeptide onto the lipid carrier undecaprenyl phosphate, yielding undecaprenyl-pyrophosphoryl-MurNAc-pentapeptide, known as lipid I.</text>
</comment>
<comment type="catalytic activity">
    <reaction evidence="1">
        <text>UDP-N-acetyl-alpha-D-muramoyl-L-alanyl-gamma-D-glutamyl-meso-2,6-diaminopimeloyl-D-alanyl-D-alanine + di-trans,octa-cis-undecaprenyl phosphate = di-trans,octa-cis-undecaprenyl diphospho-N-acetyl-alpha-D-muramoyl-L-alanyl-D-glutamyl-meso-2,6-diaminopimeloyl-D-alanyl-D-alanine + UMP</text>
        <dbReference type="Rhea" id="RHEA:28386"/>
        <dbReference type="ChEBI" id="CHEBI:57865"/>
        <dbReference type="ChEBI" id="CHEBI:60392"/>
        <dbReference type="ChEBI" id="CHEBI:61386"/>
        <dbReference type="ChEBI" id="CHEBI:61387"/>
        <dbReference type="EC" id="2.7.8.13"/>
    </reaction>
</comment>
<comment type="cofactor">
    <cofactor evidence="1">
        <name>Mg(2+)</name>
        <dbReference type="ChEBI" id="CHEBI:18420"/>
    </cofactor>
</comment>
<comment type="pathway">
    <text evidence="1">Cell wall biogenesis; peptidoglycan biosynthesis.</text>
</comment>
<comment type="subcellular location">
    <subcellularLocation>
        <location evidence="1">Cell membrane</location>
        <topology evidence="1">Multi-pass membrane protein</topology>
    </subcellularLocation>
</comment>
<comment type="similarity">
    <text evidence="1">Belongs to the glycosyltransferase 4 family. MraY subfamily.</text>
</comment>
<feature type="chain" id="PRO_1000116503" description="Phospho-N-acetylmuramoyl-pentapeptide-transferase">
    <location>
        <begin position="1"/>
        <end position="324"/>
    </location>
</feature>
<feature type="transmembrane region" description="Helical" evidence="1">
    <location>
        <begin position="5"/>
        <end position="25"/>
    </location>
</feature>
<feature type="transmembrane region" description="Helical" evidence="1">
    <location>
        <begin position="52"/>
        <end position="72"/>
    </location>
</feature>
<feature type="transmembrane region" description="Helical" evidence="1">
    <location>
        <begin position="77"/>
        <end position="97"/>
    </location>
</feature>
<feature type="transmembrane region" description="Helical" evidence="1">
    <location>
        <begin position="122"/>
        <end position="142"/>
    </location>
</feature>
<feature type="transmembrane region" description="Helical" evidence="1">
    <location>
        <begin position="149"/>
        <end position="169"/>
    </location>
</feature>
<feature type="transmembrane region" description="Helical" evidence="1">
    <location>
        <begin position="176"/>
        <end position="196"/>
    </location>
</feature>
<feature type="transmembrane region" description="Helical" evidence="1">
    <location>
        <begin position="201"/>
        <end position="221"/>
    </location>
</feature>
<feature type="transmembrane region" description="Helical" evidence="1">
    <location>
        <begin position="227"/>
        <end position="247"/>
    </location>
</feature>
<feature type="transmembrane region" description="Helical" evidence="1">
    <location>
        <begin position="253"/>
        <end position="273"/>
    </location>
</feature>
<feature type="transmembrane region" description="Helical" evidence="1">
    <location>
        <begin position="302"/>
        <end position="322"/>
    </location>
</feature>
<proteinExistence type="inferred from homology"/>
<sequence>MLEQGLLVTAGVAFLISVALSPLFIPFLRKLKFGQSIRDEGPKSHQKKSGTPTMGGIVIYVSMMVTSLIMAIKFNHLGAEVSLLLLVTFGYGLIGFLDDYIKVVKKRNLGLTSKQKLVGQLVIAIAFFLIGKGQAFHTYIMIPGTDVKFELGWAYFVLVLFMLIGGSNAVNLTDGLDGLLSGTAAIAFGAFSIIAVAQEQFGVAIFCMAVVGAVLGFLVFNANPAKVFMGDTGSLALGGAIAAVAILLKQELLLVIIGGVFVMETLSVIIQVISFKTTGKRVFKMSPLHHHYELCGWSEWRVVVTFWSVGFLLAVLGIYIGVWM</sequence>
<dbReference type="EC" id="2.7.8.13" evidence="1"/>
<dbReference type="EMBL" id="CP001283">
    <property type="protein sequence ID" value="ACK89836.1"/>
    <property type="molecule type" value="Genomic_DNA"/>
</dbReference>
<dbReference type="RefSeq" id="WP_000893058.1">
    <property type="nucleotide sequence ID" value="NC_011773.1"/>
</dbReference>
<dbReference type="SMR" id="B7JK01"/>
<dbReference type="GeneID" id="92799814"/>
<dbReference type="KEGG" id="bcu:BCAH820_3928"/>
<dbReference type="HOGENOM" id="CLU_023982_0_1_9"/>
<dbReference type="UniPathway" id="UPA00219"/>
<dbReference type="Proteomes" id="UP000001363">
    <property type="component" value="Chromosome"/>
</dbReference>
<dbReference type="GO" id="GO:0005886">
    <property type="term" value="C:plasma membrane"/>
    <property type="evidence" value="ECO:0007669"/>
    <property type="project" value="UniProtKB-SubCell"/>
</dbReference>
<dbReference type="GO" id="GO:0046872">
    <property type="term" value="F:metal ion binding"/>
    <property type="evidence" value="ECO:0007669"/>
    <property type="project" value="UniProtKB-KW"/>
</dbReference>
<dbReference type="GO" id="GO:0008963">
    <property type="term" value="F:phospho-N-acetylmuramoyl-pentapeptide-transferase activity"/>
    <property type="evidence" value="ECO:0007669"/>
    <property type="project" value="UniProtKB-UniRule"/>
</dbReference>
<dbReference type="GO" id="GO:0051992">
    <property type="term" value="F:UDP-N-acetylmuramoyl-L-alanyl-D-glutamyl-meso-2,6-diaminopimelyl-D-alanyl-D-alanine:undecaprenyl-phosphate transferase activity"/>
    <property type="evidence" value="ECO:0007669"/>
    <property type="project" value="RHEA"/>
</dbReference>
<dbReference type="GO" id="GO:0051301">
    <property type="term" value="P:cell division"/>
    <property type="evidence" value="ECO:0007669"/>
    <property type="project" value="UniProtKB-KW"/>
</dbReference>
<dbReference type="GO" id="GO:0071555">
    <property type="term" value="P:cell wall organization"/>
    <property type="evidence" value="ECO:0007669"/>
    <property type="project" value="UniProtKB-KW"/>
</dbReference>
<dbReference type="GO" id="GO:0009252">
    <property type="term" value="P:peptidoglycan biosynthetic process"/>
    <property type="evidence" value="ECO:0007669"/>
    <property type="project" value="UniProtKB-UniRule"/>
</dbReference>
<dbReference type="GO" id="GO:0008360">
    <property type="term" value="P:regulation of cell shape"/>
    <property type="evidence" value="ECO:0007669"/>
    <property type="project" value="UniProtKB-KW"/>
</dbReference>
<dbReference type="CDD" id="cd06852">
    <property type="entry name" value="GT_MraY"/>
    <property type="match status" value="1"/>
</dbReference>
<dbReference type="HAMAP" id="MF_00038">
    <property type="entry name" value="MraY"/>
    <property type="match status" value="1"/>
</dbReference>
<dbReference type="InterPro" id="IPR000715">
    <property type="entry name" value="Glycosyl_transferase_4"/>
</dbReference>
<dbReference type="InterPro" id="IPR003524">
    <property type="entry name" value="PNAcMuramoyl-5peptid_Trfase"/>
</dbReference>
<dbReference type="InterPro" id="IPR018480">
    <property type="entry name" value="PNAcMuramoyl-5peptid_Trfase_CS"/>
</dbReference>
<dbReference type="NCBIfam" id="TIGR00445">
    <property type="entry name" value="mraY"/>
    <property type="match status" value="1"/>
</dbReference>
<dbReference type="PANTHER" id="PTHR22926">
    <property type="entry name" value="PHOSPHO-N-ACETYLMURAMOYL-PENTAPEPTIDE-TRANSFERASE"/>
    <property type="match status" value="1"/>
</dbReference>
<dbReference type="PANTHER" id="PTHR22926:SF5">
    <property type="entry name" value="PHOSPHO-N-ACETYLMURAMOYL-PENTAPEPTIDE-TRANSFERASE HOMOLOG"/>
    <property type="match status" value="1"/>
</dbReference>
<dbReference type="Pfam" id="PF00953">
    <property type="entry name" value="Glycos_transf_4"/>
    <property type="match status" value="1"/>
</dbReference>
<dbReference type="Pfam" id="PF10555">
    <property type="entry name" value="MraY_sig1"/>
    <property type="match status" value="1"/>
</dbReference>
<dbReference type="PROSITE" id="PS01348">
    <property type="entry name" value="MRAY_2"/>
    <property type="match status" value="1"/>
</dbReference>
<name>MRAY_BACC0</name>
<protein>
    <recommendedName>
        <fullName evidence="1">Phospho-N-acetylmuramoyl-pentapeptide-transferase</fullName>
        <ecNumber evidence="1">2.7.8.13</ecNumber>
    </recommendedName>
    <alternativeName>
        <fullName evidence="1">UDP-MurNAc-pentapeptide phosphotransferase</fullName>
    </alternativeName>
</protein>
<evidence type="ECO:0000255" key="1">
    <source>
        <dbReference type="HAMAP-Rule" id="MF_00038"/>
    </source>
</evidence>
<gene>
    <name evidence="1" type="primary">mraY</name>
    <name type="ordered locus">BCAH820_3928</name>
</gene>
<accession>B7JK01</accession>